<reference key="1">
    <citation type="journal article" date="1998" name="Nature">
        <title>The genome sequence of Rickettsia prowazekii and the origin of mitochondria.</title>
        <authorList>
            <person name="Andersson S.G.E."/>
            <person name="Zomorodipour A."/>
            <person name="Andersson J.O."/>
            <person name="Sicheritz-Ponten T."/>
            <person name="Alsmark U.C.M."/>
            <person name="Podowski R.M."/>
            <person name="Naeslund A.K."/>
            <person name="Eriksson A.-S."/>
            <person name="Winkler H.H."/>
            <person name="Kurland C.G."/>
        </authorList>
    </citation>
    <scope>NUCLEOTIDE SEQUENCE [LARGE SCALE GENOMIC DNA]</scope>
    <source>
        <strain>Madrid E</strain>
    </source>
</reference>
<accession>Q9ZDU9</accession>
<organism>
    <name type="scientific">Rickettsia prowazekii (strain Madrid E)</name>
    <dbReference type="NCBI Taxonomy" id="272947"/>
    <lineage>
        <taxon>Bacteria</taxon>
        <taxon>Pseudomonadati</taxon>
        <taxon>Pseudomonadota</taxon>
        <taxon>Alphaproteobacteria</taxon>
        <taxon>Rickettsiales</taxon>
        <taxon>Rickettsiaceae</taxon>
        <taxon>Rickettsieae</taxon>
        <taxon>Rickettsia</taxon>
        <taxon>typhus group</taxon>
    </lineage>
</organism>
<dbReference type="EMBL" id="AJ235270">
    <property type="protein sequence ID" value="CAA14688.1"/>
    <property type="molecule type" value="Genomic_DNA"/>
</dbReference>
<dbReference type="PIR" id="A71734">
    <property type="entry name" value="A71734"/>
</dbReference>
<dbReference type="RefSeq" id="NP_220611.1">
    <property type="nucleotide sequence ID" value="NC_000963.1"/>
</dbReference>
<dbReference type="RefSeq" id="WP_010886240.1">
    <property type="nucleotide sequence ID" value="NC_000963.1"/>
</dbReference>
<dbReference type="SMR" id="Q9ZDU9"/>
<dbReference type="STRING" id="272947.gene:17555306"/>
<dbReference type="EnsemblBacteria" id="CAA14688">
    <property type="protein sequence ID" value="CAA14688"/>
    <property type="gene ID" value="CAA14688"/>
</dbReference>
<dbReference type="KEGG" id="rpr:RP225"/>
<dbReference type="PATRIC" id="fig|272947.5.peg.233"/>
<dbReference type="eggNOG" id="COG3827">
    <property type="taxonomic scope" value="Bacteria"/>
</dbReference>
<dbReference type="HOGENOM" id="CLU_078707_1_0_5"/>
<dbReference type="OrthoDB" id="7189469at2"/>
<dbReference type="Proteomes" id="UP000002480">
    <property type="component" value="Chromosome"/>
</dbReference>
<dbReference type="InterPro" id="IPR019632">
    <property type="entry name" value="DUF2497"/>
</dbReference>
<dbReference type="Pfam" id="PF10691">
    <property type="entry name" value="DUF2497"/>
    <property type="match status" value="1"/>
</dbReference>
<protein>
    <recommendedName>
        <fullName>Uncharacterized protein RP225</fullName>
    </recommendedName>
</protein>
<keyword id="KW-1185">Reference proteome</keyword>
<feature type="chain" id="PRO_0000101335" description="Uncharacterized protein RP225">
    <location>
        <begin position="1"/>
        <end position="137"/>
    </location>
</feature>
<gene>
    <name type="ordered locus">RP225</name>
</gene>
<name>Y225_RICPR</name>
<proteinExistence type="predicted"/>
<sequence length="137" mass="15979">MNKENKKNQDMSIEEILKSIKGIINERKNPIYDNYSADEDILELTDIVNQNEEENLISTKSASEVEEVFRNFTDTIKDKKLNNNFSSKNALEELVIGMLKPELKAWLDKNLPILVKELVEIEIKKLVQYSKRNDSNY</sequence>